<keyword id="KW-0002">3D-structure</keyword>
<keyword id="KW-0134">Cell wall</keyword>
<keyword id="KW-0349">Heme</keyword>
<keyword id="KW-0408">Iron</keyword>
<keyword id="KW-0479">Metal-binding</keyword>
<keyword id="KW-0572">Peptidoglycan-anchor</keyword>
<keyword id="KW-1185">Reference proteome</keyword>
<keyword id="KW-0964">Secreted</keyword>
<keyword id="KW-0732">Signal</keyword>
<sequence>MKNILKVFNTTILALIIIIATFSNSANAADSGTLNYEVYKYNTNDTSIANDYFNKPAKYIKKNGKLYVQITVNHSHWITGMSIEGHKENIISKNTAKDERTSEFEVSKLNGKIDGKIDVYIDEKVNGKPFKYDHHYNITYKFNGPTDVAGANAPGKDDKNSASGSDKGSDGTTTGQSESNSSNKDKVENPQTNAGTPAYIYAIPVASLALLIAITLFVRKKSKGNVE</sequence>
<comment type="function">
    <text evidence="1 6 8">Involved in heme (porphyrin) scavenging. Binds hemoglobin and almost exclusively free-base protoporphyrin IX. Probably has a role as the central conduit of the isd heme uptake system, i.e. mediates the transfer of the iron-containing nutrient from IsdABH to the membrane translocation system IsdDEF. Hemin-free IsdC (apo-IsdC) acquires hemin from hemin-containing IsdA (holo-IsdA) probably through the activated holo-IsdA-apo-IsdC complex and due to the higher affinity of apo-IsdC for the cofactor. The reaction is reversible (By similarity).</text>
</comment>
<comment type="subunit">
    <text evidence="1">Monomer. Interacts with IsdA (By similarity).</text>
</comment>
<comment type="subcellular location">
    <subcellularLocation>
        <location evidence="5 7">Secreted</location>
        <location evidence="5 7">Cell wall</location>
        <topology evidence="5 7">Peptidoglycan-anchor</topology>
    </subcellularLocation>
    <text evidence="5 7 14">Partially protected from extracellular protease in situ (PubMed:15718231). Anchored to the cell wall by sortase B (Probable) (PubMed:11830639, PubMed:15718231).</text>
</comment>
<comment type="induction">
    <text evidence="12">Repressed by fur in the presence of iron.</text>
</comment>
<comment type="domain">
    <text evidence="9">The NEAT domain binds Fe(3+) heme iron. Reduction of the high-spin Fe(3+) heme iron to high-spin Fe(2+) results in loss of the heme from the binding site of the protein due to the absence of a proximal histidine.</text>
</comment>
<comment type="similarity">
    <text evidence="11">Belongs to the IsdC family.</text>
</comment>
<proteinExistence type="evidence at protein level"/>
<accession>Q8KQR1</accession>
<accession>Q2FZE8</accession>
<reference key="1">
    <citation type="journal article" date="2002" name="Mol. Microbiol.">
        <title>Transferrin binding in Staphylococcus aureus: involvement of a cell wall-anchored protein.</title>
        <authorList>
            <person name="Taylor J.M."/>
            <person name="Heinrichs D.E."/>
        </authorList>
    </citation>
    <scope>NUCLEOTIDE SEQUENCE [GENOMIC DNA]</scope>
</reference>
<reference key="2">
    <citation type="book" date="2006" name="Gram positive pathogens, 2nd edition">
        <title>The Staphylococcus aureus NCTC 8325 genome.</title>
        <editorList>
            <person name="Fischetti V."/>
            <person name="Novick R."/>
            <person name="Ferretti J."/>
            <person name="Portnoy D."/>
            <person name="Rood J."/>
        </editorList>
        <authorList>
            <person name="Gillaspy A.F."/>
            <person name="Worrell V."/>
            <person name="Orvis J."/>
            <person name="Roe B.A."/>
            <person name="Dyer D.W."/>
            <person name="Iandolo J.J."/>
        </authorList>
    </citation>
    <scope>NUCLEOTIDE SEQUENCE [LARGE SCALE GENOMIC DNA]</scope>
    <source>
        <strain>NCTC 8325 / PS 47</strain>
    </source>
</reference>
<reference key="3">
    <citation type="journal article" date="2002" name="Proc. Natl. Acad. Sci. U.S.A.">
        <title>An iron-regulated sortase anchors a class of surface protein during Staphylococcus aureus pathogenesis.</title>
        <authorList>
            <person name="Mazmanian S.K."/>
            <person name="Ton-That H."/>
            <person name="Su K."/>
            <person name="Schneewind O."/>
        </authorList>
    </citation>
    <scope>PROCESSING BY SORTASE B</scope>
    <scope>SUBCELLULAR LOCATION</scope>
    <scope>REGULATION BY FUR</scope>
    <source>
        <strain>RN4220</strain>
    </source>
</reference>
<reference key="4">
    <citation type="journal article" date="2004" name="Biochem. Biophys. Res. Commun.">
        <title>In vivo heme scavenging by Staphylococcus aureus IsdC and IsdE proteins.</title>
        <authorList>
            <person name="Mack J."/>
            <person name="Vermeiren C.L."/>
            <person name="Heinrichs D.E."/>
            <person name="Stillman M.J."/>
        </authorList>
    </citation>
    <scope>FUNCTION</scope>
</reference>
<reference key="5">
    <citation type="journal article" date="2005" name="J. Biol. Chem.">
        <title>Anchor structure of staphylococcal surface proteins. V. Anchor structure of the sortase B substrate IsdC.</title>
        <authorList>
            <person name="Marraffini L.A."/>
            <person name="Schneewind O."/>
        </authorList>
    </citation>
    <scope>PROTEOLYTIC PROCESSING BY SORTASE B</scope>
    <scope>SUBCELLULAR LOCATION</scope>
    <scope>LINKAGE TO THE CELL WALL</scope>
    <source>
        <strain>RN4220</strain>
    </source>
</reference>
<reference key="6">
    <citation type="journal article" date="2008" name="J. Inorg. Biochem.">
        <title>Heme binding in the NEAT domains of IsdA and IsdC of Staphylococcus aureus.</title>
        <authorList>
            <person name="Pluym M."/>
            <person name="Muryoi N."/>
            <person name="Heinrichs D.E."/>
            <person name="Stillman M.J."/>
        </authorList>
    </citation>
    <scope>ROLE OF THE NEAT DOMAIN</scope>
</reference>
<reference key="7">
    <citation type="journal article" date="2014" name="J. Biol. Chem.">
        <title>Structural and computational studies of the Staphylococcus aureus sortase B-substrate complex reveal a substrate-stabilized oxyanion hole.</title>
        <authorList>
            <person name="Jacobitz A.W."/>
            <person name="Wereszczynski J."/>
            <person name="Yi S.W."/>
            <person name="Amer B.R."/>
            <person name="Huang G.L."/>
            <person name="Nguyen A.V."/>
            <person name="Sawaya M.R."/>
            <person name="Jung M.E."/>
            <person name="McCammon J.A."/>
            <person name="Clubb R.T."/>
        </authorList>
    </citation>
    <scope>MUTAGENESIS OF ASN-189; PRO-190; GLN-191; THR-192 AND ASN-193</scope>
</reference>
<reference key="8">
    <citation type="journal article" date="2007" name="J. Biol. Chem.">
        <title>Crystal structure of the heme-isdC complex, the central conduit of the Isd iron/heme uptake system in Staphylococcus aureus.</title>
        <authorList>
            <person name="Sharp K.H."/>
            <person name="Schneider S."/>
            <person name="Cockayne A."/>
            <person name="Paoli M."/>
        </authorList>
    </citation>
    <scope>X-RAY CRYSTALLOGRAPHY (1.5 ANGSTROMS) OF 30-188 IN COMPLEX WITH HEME</scope>
    <scope>FUNCTION</scope>
    <scope>SUBUNIT</scope>
</reference>
<feature type="signal peptide" evidence="2">
    <location>
        <begin position="1"/>
        <end position="28"/>
    </location>
</feature>
<feature type="chain" id="PRO_0000019452" description="Iron-regulated surface determinant protein C">
    <location>
        <begin position="29"/>
        <end position="192"/>
    </location>
</feature>
<feature type="propeptide" id="PRO_0000019453" description="Removed by sortase B" evidence="5 7 14">
    <location>
        <begin position="193"/>
        <end position="227"/>
    </location>
</feature>
<feature type="domain" description="NEAT" evidence="3">
    <location>
        <begin position="29"/>
        <end position="150"/>
    </location>
</feature>
<feature type="region of interest" description="Disordered" evidence="4">
    <location>
        <begin position="149"/>
        <end position="191"/>
    </location>
</feature>
<feature type="short sequence motif" description="NPQTN sorting signal" evidence="12">
    <location>
        <begin position="189"/>
        <end position="193"/>
    </location>
</feature>
<feature type="compositionally biased region" description="Low complexity" evidence="4">
    <location>
        <begin position="161"/>
        <end position="175"/>
    </location>
</feature>
<feature type="binding site" evidence="8">
    <location>
        <position position="47"/>
    </location>
    <ligand>
        <name>heme</name>
        <dbReference type="ChEBI" id="CHEBI:30413"/>
    </ligand>
</feature>
<feature type="binding site" evidence="8">
    <location>
        <position position="48"/>
    </location>
    <ligand>
        <name>heme</name>
        <dbReference type="ChEBI" id="CHEBI:30413"/>
    </ligand>
</feature>
<feature type="binding site" description="axial binding residue">
    <location>
        <position position="132"/>
    </location>
    <ligand>
        <name>heme</name>
        <dbReference type="ChEBI" id="CHEBI:30413"/>
    </ligand>
    <ligandPart>
        <name>Fe</name>
        <dbReference type="ChEBI" id="CHEBI:18248"/>
    </ligandPart>
</feature>
<feature type="binding site" evidence="8">
    <location>
        <position position="136"/>
    </location>
    <ligand>
        <name>heme</name>
        <dbReference type="ChEBI" id="CHEBI:30413"/>
    </ligand>
</feature>
<feature type="modified residue" description="Pentaglycyl murein peptidoglycan amidated threonine" evidence="12 13">
    <location>
        <position position="192"/>
    </location>
</feature>
<feature type="mutagenesis site" description="Not linked to Gly-5 via transpeptidation." evidence="10">
    <original>N</original>
    <variation>A</variation>
    <location>
        <position position="189"/>
    </location>
</feature>
<feature type="mutagenesis site" description="Not linked to Gly-5 via transpeptidation." evidence="10">
    <original>P</original>
    <variation>A</variation>
    <location>
        <position position="190"/>
    </location>
</feature>
<feature type="mutagenesis site" description="About 60% linkage to Gly-5 via transpeptidation." evidence="10">
    <original>Q</original>
    <variation>A</variation>
    <location>
        <position position="191"/>
    </location>
</feature>
<feature type="mutagenesis site" description="Not linked to Gly-5 via transpeptidation." evidence="10">
    <original>T</original>
    <variation>A</variation>
    <variation>S</variation>
    <variation>V</variation>
    <location>
        <position position="192"/>
    </location>
</feature>
<feature type="mutagenesis site" description="About 40% linkage to Gly-5 via transpeptidation." evidence="10">
    <original>N</original>
    <variation>A</variation>
    <location>
        <position position="193"/>
    </location>
</feature>
<feature type="sequence conflict" description="In Ref. 1; AAL33767." evidence="11" ref="1">
    <original>T</original>
    <variation>M</variation>
    <location>
        <position position="11"/>
    </location>
</feature>
<feature type="sequence conflict" description="In Ref. 1; AAL33767." evidence="11" ref="1">
    <original>S</original>
    <variation>T</variation>
    <location>
        <position position="25"/>
    </location>
</feature>
<feature type="sequence conflict" description="In Ref. 1; AAL33767." evidence="11" ref="1">
    <original>N</original>
    <variation>R</variation>
    <location>
        <position position="89"/>
    </location>
</feature>
<feature type="sequence conflict" description="In Ref. 1; AAL33767." evidence="11" ref="1">
    <original>T</original>
    <variation>S</variation>
    <location>
        <position position="146"/>
    </location>
</feature>
<feature type="sequence conflict" description="In Ref. 1; AAL33767." evidence="11" ref="1">
    <original>T</original>
    <variation>A</variation>
    <location>
        <position position="172"/>
    </location>
</feature>
<feature type="strand" evidence="15">
    <location>
        <begin position="30"/>
        <end position="40"/>
    </location>
</feature>
<feature type="strand" evidence="15">
    <location>
        <begin position="43"/>
        <end position="46"/>
    </location>
</feature>
<feature type="helix" evidence="15">
    <location>
        <begin position="48"/>
        <end position="52"/>
    </location>
</feature>
<feature type="strand" evidence="15">
    <location>
        <begin position="57"/>
        <end position="62"/>
    </location>
</feature>
<feature type="strand" evidence="15">
    <location>
        <begin position="65"/>
        <end position="74"/>
    </location>
</feature>
<feature type="helix" evidence="15">
    <location>
        <begin position="75"/>
        <end position="77"/>
    </location>
</feature>
<feature type="strand" evidence="15">
    <location>
        <begin position="78"/>
        <end position="83"/>
    </location>
</feature>
<feature type="strand" evidence="15">
    <location>
        <begin position="89"/>
        <end position="94"/>
    </location>
</feature>
<feature type="turn" evidence="15">
    <location>
        <begin position="95"/>
        <end position="98"/>
    </location>
</feature>
<feature type="strand" evidence="15">
    <location>
        <begin position="99"/>
        <end position="107"/>
    </location>
</feature>
<feature type="strand" evidence="15">
    <location>
        <begin position="109"/>
        <end position="125"/>
    </location>
</feature>
<feature type="strand" evidence="15">
    <location>
        <begin position="128"/>
        <end position="143"/>
    </location>
</feature>
<organism>
    <name type="scientific">Staphylococcus aureus (strain NCTC 8325 / PS 47)</name>
    <dbReference type="NCBI Taxonomy" id="93061"/>
    <lineage>
        <taxon>Bacteria</taxon>
        <taxon>Bacillati</taxon>
        <taxon>Bacillota</taxon>
        <taxon>Bacilli</taxon>
        <taxon>Bacillales</taxon>
        <taxon>Staphylococcaceae</taxon>
        <taxon>Staphylococcus</taxon>
    </lineage>
</organism>
<gene>
    <name type="primary">isdC</name>
    <name type="synonym">sirD</name>
    <name type="ordered locus">SAOUHSC_01082</name>
</gene>
<protein>
    <recommendedName>
        <fullName>Iron-regulated surface determinant protein C</fullName>
    </recommendedName>
    <alternativeName>
        <fullName>Staphylococcal iron-regulated protein D</fullName>
    </alternativeName>
</protein>
<dbReference type="EMBL" id="AY061874">
    <property type="protein sequence ID" value="AAL33767.1"/>
    <property type="molecule type" value="Genomic_DNA"/>
</dbReference>
<dbReference type="EMBL" id="CP000253">
    <property type="protein sequence ID" value="ABD30198.1"/>
    <property type="molecule type" value="Genomic_DNA"/>
</dbReference>
<dbReference type="RefSeq" id="WP_000789821.1">
    <property type="nucleotide sequence ID" value="NZ_LS483365.1"/>
</dbReference>
<dbReference type="RefSeq" id="YP_499628.1">
    <property type="nucleotide sequence ID" value="NC_007795.1"/>
</dbReference>
<dbReference type="PDB" id="2O6P">
    <property type="method" value="X-ray"/>
    <property type="resolution" value="1.50 A"/>
    <property type="chains" value="A/B=30-188"/>
</dbReference>
<dbReference type="PDBsum" id="2O6P"/>
<dbReference type="SMR" id="Q8KQR1"/>
<dbReference type="STRING" id="93061.SAOUHSC_01082"/>
<dbReference type="TCDB" id="3.A.1.14.28">
    <property type="family name" value="the atp-binding cassette (abc) superfamily"/>
</dbReference>
<dbReference type="TCDB" id="9.A.39.1.2">
    <property type="family name" value="the gram-positive bacterial hemoglobin receptor (isd) family"/>
</dbReference>
<dbReference type="TCDB" id="9.A.39.1.4">
    <property type="family name" value="the gram-positive bacterial hemoglobin receptor (isd) family"/>
</dbReference>
<dbReference type="PaxDb" id="1280-SAXN108_1126"/>
<dbReference type="GeneID" id="3919244"/>
<dbReference type="KEGG" id="sao:SAOUHSC_01082"/>
<dbReference type="PATRIC" id="fig|93061.5.peg.992"/>
<dbReference type="eggNOG" id="COG5386">
    <property type="taxonomic scope" value="Bacteria"/>
</dbReference>
<dbReference type="HOGENOM" id="CLU_092243_1_0_9"/>
<dbReference type="OrthoDB" id="2413751at2"/>
<dbReference type="EvolutionaryTrace" id="Q8KQR1"/>
<dbReference type="PRO" id="PR:Q8KQR1"/>
<dbReference type="Proteomes" id="UP000008816">
    <property type="component" value="Chromosome"/>
</dbReference>
<dbReference type="GO" id="GO:0005576">
    <property type="term" value="C:extracellular region"/>
    <property type="evidence" value="ECO:0007669"/>
    <property type="project" value="UniProtKB-KW"/>
</dbReference>
<dbReference type="GO" id="GO:0009274">
    <property type="term" value="C:peptidoglycan-based cell wall"/>
    <property type="evidence" value="ECO:0007669"/>
    <property type="project" value="InterPro"/>
</dbReference>
<dbReference type="GO" id="GO:0030492">
    <property type="term" value="F:hemoglobin binding"/>
    <property type="evidence" value="ECO:0007669"/>
    <property type="project" value="InterPro"/>
</dbReference>
<dbReference type="GO" id="GO:0046872">
    <property type="term" value="F:metal ion binding"/>
    <property type="evidence" value="ECO:0007669"/>
    <property type="project" value="UniProtKB-KW"/>
</dbReference>
<dbReference type="GO" id="GO:0015886">
    <property type="term" value="P:heme transport"/>
    <property type="evidence" value="ECO:0007669"/>
    <property type="project" value="InterPro"/>
</dbReference>
<dbReference type="CDD" id="cd06920">
    <property type="entry name" value="NEAT"/>
    <property type="match status" value="1"/>
</dbReference>
<dbReference type="Gene3D" id="2.60.40.1850">
    <property type="match status" value="1"/>
</dbReference>
<dbReference type="InterPro" id="IPR019909">
    <property type="entry name" value="Haem_uptake_protein_IsdC"/>
</dbReference>
<dbReference type="InterPro" id="IPR050436">
    <property type="entry name" value="IsdA"/>
</dbReference>
<dbReference type="InterPro" id="IPR006635">
    <property type="entry name" value="NEAT_dom"/>
</dbReference>
<dbReference type="InterPro" id="IPR037250">
    <property type="entry name" value="NEAT_dom_sf"/>
</dbReference>
<dbReference type="InterPro" id="IPR017505">
    <property type="entry name" value="Sortase_SrtB_sig_NPQTN"/>
</dbReference>
<dbReference type="NCBIfam" id="TIGR03656">
    <property type="entry name" value="IsdC"/>
    <property type="match status" value="1"/>
</dbReference>
<dbReference type="NCBIfam" id="TIGR03068">
    <property type="entry name" value="srtB_sig_NPQTN"/>
    <property type="match status" value="1"/>
</dbReference>
<dbReference type="PANTHER" id="PTHR37824">
    <property type="entry name" value="IRON-REGULATED SURFACE DETERMINANT PROTEIN C"/>
    <property type="match status" value="1"/>
</dbReference>
<dbReference type="PANTHER" id="PTHR37824:SF1">
    <property type="entry name" value="IRON-REGULATED SURFACE DETERMINANT PROTEIN C"/>
    <property type="match status" value="1"/>
</dbReference>
<dbReference type="Pfam" id="PF05031">
    <property type="entry name" value="NEAT"/>
    <property type="match status" value="1"/>
</dbReference>
<dbReference type="SMART" id="SM00725">
    <property type="entry name" value="NEAT"/>
    <property type="match status" value="1"/>
</dbReference>
<dbReference type="SUPFAM" id="SSF158911">
    <property type="entry name" value="NEAT domain-like"/>
    <property type="match status" value="1"/>
</dbReference>
<dbReference type="PROSITE" id="PS50978">
    <property type="entry name" value="NEAT"/>
    <property type="match status" value="1"/>
</dbReference>
<evidence type="ECO:0000250" key="1"/>
<evidence type="ECO:0000255" key="2"/>
<evidence type="ECO:0000255" key="3">
    <source>
        <dbReference type="PROSITE-ProRule" id="PRU00337"/>
    </source>
</evidence>
<evidence type="ECO:0000256" key="4">
    <source>
        <dbReference type="SAM" id="MobiDB-lite"/>
    </source>
</evidence>
<evidence type="ECO:0000269" key="5">
    <source>
    </source>
</evidence>
<evidence type="ECO:0000269" key="6">
    <source>
    </source>
</evidence>
<evidence type="ECO:0000269" key="7">
    <source>
    </source>
</evidence>
<evidence type="ECO:0000269" key="8">
    <source>
    </source>
</evidence>
<evidence type="ECO:0000269" key="9">
    <source>
    </source>
</evidence>
<evidence type="ECO:0000269" key="10">
    <source>
    </source>
</evidence>
<evidence type="ECO:0000305" key="11"/>
<evidence type="ECO:0000305" key="12">
    <source>
    </source>
</evidence>
<evidence type="ECO:0000305" key="13">
    <source>
    </source>
</evidence>
<evidence type="ECO:0000305" key="14">
    <source>
    </source>
</evidence>
<evidence type="ECO:0007829" key="15">
    <source>
        <dbReference type="PDB" id="2O6P"/>
    </source>
</evidence>
<name>ISDC_STAA8</name>